<proteinExistence type="inferred from homology"/>
<accession>A1WMG5</accession>
<reference key="1">
    <citation type="submission" date="2006-12" db="EMBL/GenBank/DDBJ databases">
        <title>Complete sequence of chromosome 1 of Verminephrobacter eiseniae EF01-2.</title>
        <authorList>
            <person name="Copeland A."/>
            <person name="Lucas S."/>
            <person name="Lapidus A."/>
            <person name="Barry K."/>
            <person name="Detter J.C."/>
            <person name="Glavina del Rio T."/>
            <person name="Dalin E."/>
            <person name="Tice H."/>
            <person name="Pitluck S."/>
            <person name="Chertkov O."/>
            <person name="Brettin T."/>
            <person name="Bruce D."/>
            <person name="Han C."/>
            <person name="Tapia R."/>
            <person name="Gilna P."/>
            <person name="Schmutz J."/>
            <person name="Larimer F."/>
            <person name="Land M."/>
            <person name="Hauser L."/>
            <person name="Kyrpides N."/>
            <person name="Kim E."/>
            <person name="Stahl D."/>
            <person name="Richardson P."/>
        </authorList>
    </citation>
    <scope>NUCLEOTIDE SEQUENCE [LARGE SCALE GENOMIC DNA]</scope>
    <source>
        <strain>EF01-2</strain>
    </source>
</reference>
<dbReference type="EC" id="6.1.1.3" evidence="1"/>
<dbReference type="EMBL" id="CP000542">
    <property type="protein sequence ID" value="ABM58822.1"/>
    <property type="molecule type" value="Genomic_DNA"/>
</dbReference>
<dbReference type="RefSeq" id="WP_011810817.1">
    <property type="nucleotide sequence ID" value="NC_008786.1"/>
</dbReference>
<dbReference type="SMR" id="A1WMG5"/>
<dbReference type="STRING" id="391735.Veis_3089"/>
<dbReference type="GeneID" id="76461551"/>
<dbReference type="KEGG" id="vei:Veis_3089"/>
<dbReference type="eggNOG" id="COG0441">
    <property type="taxonomic scope" value="Bacteria"/>
</dbReference>
<dbReference type="HOGENOM" id="CLU_008554_0_1_4"/>
<dbReference type="OrthoDB" id="9802304at2"/>
<dbReference type="Proteomes" id="UP000000374">
    <property type="component" value="Chromosome"/>
</dbReference>
<dbReference type="GO" id="GO:0005829">
    <property type="term" value="C:cytosol"/>
    <property type="evidence" value="ECO:0007669"/>
    <property type="project" value="TreeGrafter"/>
</dbReference>
<dbReference type="GO" id="GO:0005524">
    <property type="term" value="F:ATP binding"/>
    <property type="evidence" value="ECO:0007669"/>
    <property type="project" value="UniProtKB-UniRule"/>
</dbReference>
<dbReference type="GO" id="GO:0046872">
    <property type="term" value="F:metal ion binding"/>
    <property type="evidence" value="ECO:0007669"/>
    <property type="project" value="UniProtKB-KW"/>
</dbReference>
<dbReference type="GO" id="GO:0004829">
    <property type="term" value="F:threonine-tRNA ligase activity"/>
    <property type="evidence" value="ECO:0007669"/>
    <property type="project" value="UniProtKB-UniRule"/>
</dbReference>
<dbReference type="GO" id="GO:0000049">
    <property type="term" value="F:tRNA binding"/>
    <property type="evidence" value="ECO:0007669"/>
    <property type="project" value="UniProtKB-KW"/>
</dbReference>
<dbReference type="GO" id="GO:0006435">
    <property type="term" value="P:threonyl-tRNA aminoacylation"/>
    <property type="evidence" value="ECO:0007669"/>
    <property type="project" value="UniProtKB-UniRule"/>
</dbReference>
<dbReference type="CDD" id="cd01667">
    <property type="entry name" value="TGS_ThrRS"/>
    <property type="match status" value="1"/>
</dbReference>
<dbReference type="CDD" id="cd00771">
    <property type="entry name" value="ThrRS_core"/>
    <property type="match status" value="1"/>
</dbReference>
<dbReference type="FunFam" id="3.10.20.30:FF:000005">
    <property type="entry name" value="Threonine--tRNA ligase"/>
    <property type="match status" value="1"/>
</dbReference>
<dbReference type="FunFam" id="3.30.54.20:FF:000002">
    <property type="entry name" value="Threonine--tRNA ligase"/>
    <property type="match status" value="1"/>
</dbReference>
<dbReference type="FunFam" id="3.30.930.10:FF:000002">
    <property type="entry name" value="Threonine--tRNA ligase"/>
    <property type="match status" value="1"/>
</dbReference>
<dbReference type="FunFam" id="3.40.50.800:FF:000001">
    <property type="entry name" value="Threonine--tRNA ligase"/>
    <property type="match status" value="1"/>
</dbReference>
<dbReference type="FunFam" id="3.30.980.10:FF:000005">
    <property type="entry name" value="Threonyl-tRNA synthetase, mitochondrial"/>
    <property type="match status" value="1"/>
</dbReference>
<dbReference type="Gene3D" id="3.10.20.30">
    <property type="match status" value="1"/>
</dbReference>
<dbReference type="Gene3D" id="3.30.54.20">
    <property type="match status" value="1"/>
</dbReference>
<dbReference type="Gene3D" id="3.40.50.800">
    <property type="entry name" value="Anticodon-binding domain"/>
    <property type="match status" value="1"/>
</dbReference>
<dbReference type="Gene3D" id="3.30.930.10">
    <property type="entry name" value="Bira Bifunctional Protein, Domain 2"/>
    <property type="match status" value="1"/>
</dbReference>
<dbReference type="Gene3D" id="3.30.980.10">
    <property type="entry name" value="Threonyl-trna Synthetase, Chain A, domain 2"/>
    <property type="match status" value="1"/>
</dbReference>
<dbReference type="HAMAP" id="MF_00184">
    <property type="entry name" value="Thr_tRNA_synth"/>
    <property type="match status" value="1"/>
</dbReference>
<dbReference type="InterPro" id="IPR002314">
    <property type="entry name" value="aa-tRNA-synt_IIb"/>
</dbReference>
<dbReference type="InterPro" id="IPR006195">
    <property type="entry name" value="aa-tRNA-synth_II"/>
</dbReference>
<dbReference type="InterPro" id="IPR045864">
    <property type="entry name" value="aa-tRNA-synth_II/BPL/LPL"/>
</dbReference>
<dbReference type="InterPro" id="IPR004154">
    <property type="entry name" value="Anticodon-bd"/>
</dbReference>
<dbReference type="InterPro" id="IPR036621">
    <property type="entry name" value="Anticodon-bd_dom_sf"/>
</dbReference>
<dbReference type="InterPro" id="IPR012675">
    <property type="entry name" value="Beta-grasp_dom_sf"/>
</dbReference>
<dbReference type="InterPro" id="IPR004095">
    <property type="entry name" value="TGS"/>
</dbReference>
<dbReference type="InterPro" id="IPR012676">
    <property type="entry name" value="TGS-like"/>
</dbReference>
<dbReference type="InterPro" id="IPR002320">
    <property type="entry name" value="Thr-tRNA-ligase_IIa"/>
</dbReference>
<dbReference type="InterPro" id="IPR018163">
    <property type="entry name" value="Thr/Ala-tRNA-synth_IIc_edit"/>
</dbReference>
<dbReference type="InterPro" id="IPR033728">
    <property type="entry name" value="ThrRS_core"/>
</dbReference>
<dbReference type="InterPro" id="IPR012947">
    <property type="entry name" value="tRNA_SAD"/>
</dbReference>
<dbReference type="NCBIfam" id="TIGR00418">
    <property type="entry name" value="thrS"/>
    <property type="match status" value="1"/>
</dbReference>
<dbReference type="PANTHER" id="PTHR11451:SF44">
    <property type="entry name" value="THREONINE--TRNA LIGASE, CHLOROPLASTIC_MITOCHONDRIAL 2"/>
    <property type="match status" value="1"/>
</dbReference>
<dbReference type="PANTHER" id="PTHR11451">
    <property type="entry name" value="THREONINE-TRNA LIGASE"/>
    <property type="match status" value="1"/>
</dbReference>
<dbReference type="Pfam" id="PF03129">
    <property type="entry name" value="HGTP_anticodon"/>
    <property type="match status" value="1"/>
</dbReference>
<dbReference type="Pfam" id="PF02824">
    <property type="entry name" value="TGS"/>
    <property type="match status" value="1"/>
</dbReference>
<dbReference type="Pfam" id="PF00587">
    <property type="entry name" value="tRNA-synt_2b"/>
    <property type="match status" value="1"/>
</dbReference>
<dbReference type="Pfam" id="PF07973">
    <property type="entry name" value="tRNA_SAD"/>
    <property type="match status" value="1"/>
</dbReference>
<dbReference type="PRINTS" id="PR01047">
    <property type="entry name" value="TRNASYNTHTHR"/>
</dbReference>
<dbReference type="SMART" id="SM00863">
    <property type="entry name" value="tRNA_SAD"/>
    <property type="match status" value="1"/>
</dbReference>
<dbReference type="SUPFAM" id="SSF52954">
    <property type="entry name" value="Class II aaRS ABD-related"/>
    <property type="match status" value="1"/>
</dbReference>
<dbReference type="SUPFAM" id="SSF55681">
    <property type="entry name" value="Class II aaRS and biotin synthetases"/>
    <property type="match status" value="1"/>
</dbReference>
<dbReference type="SUPFAM" id="SSF81271">
    <property type="entry name" value="TGS-like"/>
    <property type="match status" value="1"/>
</dbReference>
<dbReference type="SUPFAM" id="SSF55186">
    <property type="entry name" value="ThrRS/AlaRS common domain"/>
    <property type="match status" value="1"/>
</dbReference>
<dbReference type="PROSITE" id="PS50862">
    <property type="entry name" value="AA_TRNA_LIGASE_II"/>
    <property type="match status" value="1"/>
</dbReference>
<dbReference type="PROSITE" id="PS51880">
    <property type="entry name" value="TGS"/>
    <property type="match status" value="1"/>
</dbReference>
<organism>
    <name type="scientific">Verminephrobacter eiseniae (strain EF01-2)</name>
    <dbReference type="NCBI Taxonomy" id="391735"/>
    <lineage>
        <taxon>Bacteria</taxon>
        <taxon>Pseudomonadati</taxon>
        <taxon>Pseudomonadota</taxon>
        <taxon>Betaproteobacteria</taxon>
        <taxon>Burkholderiales</taxon>
        <taxon>Comamonadaceae</taxon>
        <taxon>Verminephrobacter</taxon>
    </lineage>
</organism>
<feature type="chain" id="PRO_1000020549" description="Threonine--tRNA ligase">
    <location>
        <begin position="1"/>
        <end position="639"/>
    </location>
</feature>
<feature type="domain" description="TGS" evidence="2">
    <location>
        <begin position="1"/>
        <end position="61"/>
    </location>
</feature>
<feature type="region of interest" description="Catalytic" evidence="1">
    <location>
        <begin position="242"/>
        <end position="533"/>
    </location>
</feature>
<feature type="binding site" evidence="1">
    <location>
        <position position="333"/>
    </location>
    <ligand>
        <name>Zn(2+)</name>
        <dbReference type="ChEBI" id="CHEBI:29105"/>
    </ligand>
</feature>
<feature type="binding site" evidence="1">
    <location>
        <position position="384"/>
    </location>
    <ligand>
        <name>Zn(2+)</name>
        <dbReference type="ChEBI" id="CHEBI:29105"/>
    </ligand>
</feature>
<feature type="binding site" evidence="1">
    <location>
        <position position="510"/>
    </location>
    <ligand>
        <name>Zn(2+)</name>
        <dbReference type="ChEBI" id="CHEBI:29105"/>
    </ligand>
</feature>
<protein>
    <recommendedName>
        <fullName evidence="1">Threonine--tRNA ligase</fullName>
        <ecNumber evidence="1">6.1.1.3</ecNumber>
    </recommendedName>
    <alternativeName>
        <fullName evidence="1">Threonyl-tRNA synthetase</fullName>
        <shortName evidence="1">ThrRS</shortName>
    </alternativeName>
</protein>
<gene>
    <name evidence="1" type="primary">thrS</name>
    <name type="ordered locus">Veis_3089</name>
</gene>
<comment type="function">
    <text evidence="1">Catalyzes the attachment of threonine to tRNA(Thr) in a two-step reaction: L-threonine is first activated by ATP to form Thr-AMP and then transferred to the acceptor end of tRNA(Thr). Also edits incorrectly charged L-seryl-tRNA(Thr).</text>
</comment>
<comment type="catalytic activity">
    <reaction evidence="1">
        <text>tRNA(Thr) + L-threonine + ATP = L-threonyl-tRNA(Thr) + AMP + diphosphate + H(+)</text>
        <dbReference type="Rhea" id="RHEA:24624"/>
        <dbReference type="Rhea" id="RHEA-COMP:9670"/>
        <dbReference type="Rhea" id="RHEA-COMP:9704"/>
        <dbReference type="ChEBI" id="CHEBI:15378"/>
        <dbReference type="ChEBI" id="CHEBI:30616"/>
        <dbReference type="ChEBI" id="CHEBI:33019"/>
        <dbReference type="ChEBI" id="CHEBI:57926"/>
        <dbReference type="ChEBI" id="CHEBI:78442"/>
        <dbReference type="ChEBI" id="CHEBI:78534"/>
        <dbReference type="ChEBI" id="CHEBI:456215"/>
        <dbReference type="EC" id="6.1.1.3"/>
    </reaction>
</comment>
<comment type="cofactor">
    <cofactor evidence="1">
        <name>Zn(2+)</name>
        <dbReference type="ChEBI" id="CHEBI:29105"/>
    </cofactor>
    <text evidence="1">Binds 1 zinc ion per subunit.</text>
</comment>
<comment type="subunit">
    <text evidence="1">Homodimer.</text>
</comment>
<comment type="subcellular location">
    <subcellularLocation>
        <location evidence="1">Cytoplasm</location>
    </subcellularLocation>
</comment>
<comment type="similarity">
    <text evidence="1">Belongs to the class-II aminoacyl-tRNA synthetase family.</text>
</comment>
<name>SYT_VEREI</name>
<keyword id="KW-0030">Aminoacyl-tRNA synthetase</keyword>
<keyword id="KW-0067">ATP-binding</keyword>
<keyword id="KW-0963">Cytoplasm</keyword>
<keyword id="KW-0436">Ligase</keyword>
<keyword id="KW-0479">Metal-binding</keyword>
<keyword id="KW-0547">Nucleotide-binding</keyword>
<keyword id="KW-0648">Protein biosynthesis</keyword>
<keyword id="KW-1185">Reference proteome</keyword>
<keyword id="KW-0694">RNA-binding</keyword>
<keyword id="KW-0820">tRNA-binding</keyword>
<keyword id="KW-0862">Zinc</keyword>
<sequence length="639" mass="72139">MIHITLPDGSQRAFPGPVTVAEVAASIGPGLAKAALAGKIGDQLLDTSHRITADCRLSIITDKDDAGLELIRHSTAHLLAYAVKELFPEAQVTIGPVIDNGFYYDFAYQRPFTPDDLVAMEKRMAELAAKDEPVLRRVLPRDAAIAYFKGLGEHYKAEIIAGIPGDEEVSLYREGSFEDLCRGPHVPSTGKLKFFKLMKVAGAYWRGDHRNQMLQRVYGTAWASKEALQQYLTMLEEAEKRDHRKLGRELDLFHIDEHSPGTVFWHPKGWTLWQEVEQYMRRVYRDNGYQEVKGPQILDQGLWEKTGHWDKYRENMFVTESEKRDYALKPMNCPGHIIIFKQGIKSYRDLPLRFGEFGQCHRNEPSGGLHGIMRVRAFTQDDGHIFCTAQQIQSEILAFTALVQKVYRDFGFTDIIYKLATRPEKHIGTEESWDQAEHALAQGLRASGCEFEYLPGEGAFYGPKVEYTLKDALGRQWQCGTIQVDPNMPERLDAEFVGEDGARHRPIMLHRAIVGSLERFIGILLEQHAGALPAWLAPVQLALLNITEAQSDYCREIAAKMQKALSHLGLRLLLDLRNEKITYKIREHSMQKLPYILVAGDKERAAGAVAVRARGHGDLGVMSVDAFIERIADEISTKA</sequence>
<evidence type="ECO:0000255" key="1">
    <source>
        <dbReference type="HAMAP-Rule" id="MF_00184"/>
    </source>
</evidence>
<evidence type="ECO:0000255" key="2">
    <source>
        <dbReference type="PROSITE-ProRule" id="PRU01228"/>
    </source>
</evidence>